<dbReference type="EC" id="2.4.1.298"/>
<dbReference type="EMBL" id="AB013597">
    <property type="protein sequence ID" value="BAA36422.1"/>
    <property type="molecule type" value="mRNA"/>
</dbReference>
<dbReference type="SMR" id="Q9ZR26"/>
<dbReference type="CAZy" id="GT1">
    <property type="family name" value="Glycosyltransferase Family 1"/>
</dbReference>
<dbReference type="BRENDA" id="2.4.1.298">
    <property type="organism ID" value="4681"/>
</dbReference>
<dbReference type="UniPathway" id="UPA00009"/>
<dbReference type="GO" id="GO:0080043">
    <property type="term" value="F:quercetin 3-O-glucosyltransferase activity"/>
    <property type="evidence" value="ECO:0007669"/>
    <property type="project" value="TreeGrafter"/>
</dbReference>
<dbReference type="GO" id="GO:0080044">
    <property type="term" value="F:quercetin 7-O-glucosyltransferase activity"/>
    <property type="evidence" value="ECO:0007669"/>
    <property type="project" value="TreeGrafter"/>
</dbReference>
<dbReference type="GO" id="GO:0102816">
    <property type="term" value="F:UDP-D-glucose:delphinidin 3-O-glucosyl-5-O-caffeoylglucoside -O-beta-D-glucosyltransferase activity"/>
    <property type="evidence" value="ECO:0007669"/>
    <property type="project" value="UniProtKB-EC"/>
</dbReference>
<dbReference type="GO" id="GO:0009718">
    <property type="term" value="P:anthocyanin-containing compound biosynthetic process"/>
    <property type="evidence" value="ECO:0007669"/>
    <property type="project" value="UniProtKB-UniPathway"/>
</dbReference>
<dbReference type="CDD" id="cd03784">
    <property type="entry name" value="GT1_Gtf-like"/>
    <property type="match status" value="1"/>
</dbReference>
<dbReference type="FunFam" id="3.40.50.2000:FF:000019">
    <property type="entry name" value="Glycosyltransferase"/>
    <property type="match status" value="1"/>
</dbReference>
<dbReference type="Gene3D" id="3.40.50.2000">
    <property type="entry name" value="Glycogen Phosphorylase B"/>
    <property type="match status" value="2"/>
</dbReference>
<dbReference type="InterPro" id="IPR002213">
    <property type="entry name" value="UDP_glucos_trans"/>
</dbReference>
<dbReference type="InterPro" id="IPR035595">
    <property type="entry name" value="UDP_glycos_trans_CS"/>
</dbReference>
<dbReference type="PANTHER" id="PTHR11926">
    <property type="entry name" value="GLUCOSYL/GLUCURONOSYL TRANSFERASES"/>
    <property type="match status" value="1"/>
</dbReference>
<dbReference type="PANTHER" id="PTHR11926:SF870">
    <property type="entry name" value="UDP-GLYCOSYLTRANSFERASE 75B1"/>
    <property type="match status" value="1"/>
</dbReference>
<dbReference type="Pfam" id="PF00201">
    <property type="entry name" value="UDPGT"/>
    <property type="match status" value="1"/>
</dbReference>
<dbReference type="SUPFAM" id="SSF53756">
    <property type="entry name" value="UDP-Glycosyltransferase/glycogen phosphorylase"/>
    <property type="match status" value="1"/>
</dbReference>
<dbReference type="PROSITE" id="PS00375">
    <property type="entry name" value="UDPGT"/>
    <property type="match status" value="1"/>
</dbReference>
<organism>
    <name type="scientific">Perilla frutescens</name>
    <name type="common">Beefsteak mint</name>
    <name type="synonym">Perilla ocymoides</name>
    <dbReference type="NCBI Taxonomy" id="48386"/>
    <lineage>
        <taxon>Eukaryota</taxon>
        <taxon>Viridiplantae</taxon>
        <taxon>Streptophyta</taxon>
        <taxon>Embryophyta</taxon>
        <taxon>Tracheophyta</taxon>
        <taxon>Spermatophyta</taxon>
        <taxon>Magnoliopsida</taxon>
        <taxon>eudicotyledons</taxon>
        <taxon>Gunneridae</taxon>
        <taxon>Pentapetalae</taxon>
        <taxon>asterids</taxon>
        <taxon>lamiids</taxon>
        <taxon>Lamiales</taxon>
        <taxon>Lamiaceae</taxon>
        <taxon>Nepetoideae</taxon>
        <taxon>Elsholtzieae</taxon>
        <taxon>Perilla</taxon>
    </lineage>
</organism>
<keyword id="KW-0328">Glycosyltransferase</keyword>
<keyword id="KW-0732">Signal</keyword>
<keyword id="KW-0808">Transferase</keyword>
<accession>Q9ZR26</accession>
<reference key="1">
    <citation type="journal article" date="1999" name="J. Biol. Chem.">
        <title>Molecular cloning and biochemical characterization of a novel anthocyanin 5-O-glucosyltransferase by mRNA differential display for plant forms regarding anthocyanin.</title>
        <authorList>
            <person name="Yamazaki M."/>
            <person name="Gong Z."/>
            <person name="Fukuchi-Mizutani M."/>
            <person name="Fukui Y."/>
            <person name="Tanaka Y."/>
            <person name="Kusumi T."/>
            <person name="Saito K."/>
        </authorList>
    </citation>
    <scope>NUCLEOTIDE SEQUENCE [MRNA]</scope>
    <source>
        <tissue>Leaf</tissue>
    </source>
</reference>
<comment type="function">
    <text evidence="1">Catalyzes the glucosylation at the O-5 position of anthocyanidin 3-glucosides to form anthocyanidin 3,5-di-O-glucosides using UDP-glucose as sugar donor. Anthocyanidin 3,5-di-O-glucosides are molecules that are responsible for pigmentation. Also acts on anthocyanidin 3-O-(6-O-malonylglucoside). Much less active with hydroxycinnamoylglucose derivatives. No activity in the absence of the 3-O-glucoside group (By similarity).</text>
</comment>
<comment type="catalytic activity">
    <reaction>
        <text>an anthocyanidin 3-O-beta-D-glucoside + UDP-alpha-D-glucose = an anthocyanidin 3,5-di-O-beta-D-glucoside + UDP + 2 H(+)</text>
        <dbReference type="Rhea" id="RHEA:35423"/>
        <dbReference type="ChEBI" id="CHEBI:15378"/>
        <dbReference type="ChEBI" id="CHEBI:16307"/>
        <dbReference type="ChEBI" id="CHEBI:57503"/>
        <dbReference type="ChEBI" id="CHEBI:58223"/>
        <dbReference type="ChEBI" id="CHEBI:58885"/>
        <dbReference type="EC" id="2.4.1.298"/>
    </reaction>
</comment>
<comment type="pathway">
    <text>Pigment biosynthesis; anthocyanin biosynthesis.</text>
</comment>
<comment type="similarity">
    <text evidence="5">Belongs to the UDP-glycosyltransferase family.</text>
</comment>
<comment type="caution">
    <text evidence="6">No enzymatic activity has been detected when expressed in yeast, suggesting it may be inactive.</text>
</comment>
<evidence type="ECO:0000250" key="1"/>
<evidence type="ECO:0000250" key="2">
    <source>
        <dbReference type="UniProtKB" id="A0A0A1HA03"/>
    </source>
</evidence>
<evidence type="ECO:0000250" key="3">
    <source>
        <dbReference type="UniProtKB" id="P51094"/>
    </source>
</evidence>
<evidence type="ECO:0000255" key="4"/>
<evidence type="ECO:0000305" key="5"/>
<evidence type="ECO:0000305" key="6">
    <source>
    </source>
</evidence>
<protein>
    <recommendedName>
        <fullName>Anthocyanidin 3-O-glucoside 5-O-glucosyltransferase 2</fullName>
        <ecNumber>2.4.1.298</ecNumber>
    </recommendedName>
    <alternativeName>
        <fullName>UDP-glucose:anthocyanin 5-O-glucosyltransferase 3R6</fullName>
        <shortName>p3R6</shortName>
    </alternativeName>
</protein>
<name>5GT2_PERFR</name>
<feature type="signal peptide" evidence="4">
    <location>
        <begin position="1"/>
        <end position="22"/>
    </location>
</feature>
<feature type="chain" id="PRO_0000422565" description="Anthocyanidin 3-O-glucoside 5-O-glucosyltransferase 2">
    <location>
        <begin position="23"/>
        <end position="443"/>
    </location>
</feature>
<feature type="active site" description="Proton acceptor" evidence="2">
    <location>
        <position position="16"/>
    </location>
</feature>
<feature type="binding site" evidence="3">
    <location>
        <position position="16"/>
    </location>
    <ligand>
        <name>an anthocyanidin</name>
        <dbReference type="ChEBI" id="CHEBI:143576"/>
    </ligand>
</feature>
<feature type="binding site" evidence="2">
    <location>
        <position position="340"/>
    </location>
    <ligand>
        <name>UDP-alpha-D-glucose</name>
        <dbReference type="ChEBI" id="CHEBI:58885"/>
    </ligand>
</feature>
<feature type="binding site" evidence="2">
    <location>
        <position position="355"/>
    </location>
    <ligand>
        <name>UDP-alpha-D-glucose</name>
        <dbReference type="ChEBI" id="CHEBI:58885"/>
    </ligand>
</feature>
<feature type="binding site" evidence="2">
    <location>
        <position position="358"/>
    </location>
    <ligand>
        <name>UDP-alpha-D-glucose</name>
        <dbReference type="ChEBI" id="CHEBI:58885"/>
    </ligand>
</feature>
<feature type="binding site" evidence="2">
    <location>
        <position position="359"/>
    </location>
    <ligand>
        <name>UDP-alpha-D-glucose</name>
        <dbReference type="ChEBI" id="CHEBI:58885"/>
    </ligand>
</feature>
<feature type="binding site" evidence="2">
    <location>
        <position position="360"/>
    </location>
    <ligand>
        <name>UDP-alpha-D-glucose</name>
        <dbReference type="ChEBI" id="CHEBI:58885"/>
    </ligand>
</feature>
<feature type="binding site" evidence="2">
    <location>
        <position position="363"/>
    </location>
    <ligand>
        <name>UDP-alpha-D-glucose</name>
        <dbReference type="ChEBI" id="CHEBI:58885"/>
    </ligand>
</feature>
<feature type="binding site" evidence="2">
    <location>
        <position position="379"/>
    </location>
    <ligand>
        <name>UDP-alpha-D-glucose</name>
        <dbReference type="ChEBI" id="CHEBI:58885"/>
    </ligand>
</feature>
<feature type="binding site" evidence="2">
    <location>
        <position position="380"/>
    </location>
    <ligand>
        <name>UDP-alpha-D-glucose</name>
        <dbReference type="ChEBI" id="CHEBI:58885"/>
    </ligand>
</feature>
<proteinExistence type="evidence at transcript level"/>
<gene>
    <name type="primary">PF3R6</name>
</gene>
<sequence length="443" mass="49110">MVRRRVLLATFPAQGHINPALQFAKRLLKAGTDVTFFTSVYAWRRMANTASAAAGNPPGLDFVAFSDGYDDGLKPGGDGKRYMSEMKARGSEALRNLLLNNDDVTFVVYSHLFAWAAEVARLSHVPTALLWVEPATVLCIYHFYFNGYADEIDAGSNEIQLPRLPSLEQRSLPTFLLPATPERFRLMMKEKLETLDGEEKAKVLVNTFDALEPDALTAIDRYELIGIGPLIPSAFLDGEDPSETSYGGDLFEKSEENNCVEWLNSKPKSSVVYVSFGSVLRFPKAQMEEIGKGLLACGRPFLWMIREQKNDDGEEEEEEEELSCIGELKKMGKIVSWCSQLEVLAHPALGCFVTHCGWNSAVESLSCGIPVVAVPQWFDQTTNAKLIEDAWGTGVRVRMNEGGGVDGCEIERCVEMVMDGGDKTKLVRENAIKWKTLARQAMG</sequence>